<keyword id="KW-1003">Cell membrane</keyword>
<keyword id="KW-0407">Ion channel</keyword>
<keyword id="KW-0406">Ion transport</keyword>
<keyword id="KW-0472">Membrane</keyword>
<keyword id="KW-0630">Potassium</keyword>
<keyword id="KW-0631">Potassium channel</keyword>
<keyword id="KW-0633">Potassium transport</keyword>
<keyword id="KW-1185">Reference proteome</keyword>
<keyword id="KW-0812">Transmembrane</keyword>
<keyword id="KW-1133">Transmembrane helix</keyword>
<keyword id="KW-0813">Transport</keyword>
<keyword id="KW-0851">Voltage-gated channel</keyword>
<accession>Q9BDR0</accession>
<organism>
    <name type="scientific">Oryctolagus cuniculus</name>
    <name type="common">Rabbit</name>
    <dbReference type="NCBI Taxonomy" id="9986"/>
    <lineage>
        <taxon>Eukaryota</taxon>
        <taxon>Metazoa</taxon>
        <taxon>Chordata</taxon>
        <taxon>Craniata</taxon>
        <taxon>Vertebrata</taxon>
        <taxon>Euteleostomi</taxon>
        <taxon>Mammalia</taxon>
        <taxon>Eutheria</taxon>
        <taxon>Euarchontoglires</taxon>
        <taxon>Glires</taxon>
        <taxon>Lagomorpha</taxon>
        <taxon>Leporidae</taxon>
        <taxon>Oryctolagus</taxon>
    </lineage>
</organism>
<protein>
    <recommendedName>
        <fullName>Potassium voltage-gated channel subfamily E member 2</fullName>
    </recommendedName>
    <alternativeName>
        <fullName>MinK-related peptide 1</fullName>
    </alternativeName>
    <alternativeName>
        <fullName>Minimum potassium ion channel-related peptide 1</fullName>
    </alternativeName>
    <alternativeName>
        <fullName>Potassium channel subunit beta MiRP1</fullName>
    </alternativeName>
</protein>
<comment type="function">
    <text evidence="1 2 3">Ancillary protein that functions as a regulatory subunit of the voltage-gated potassium (Kv) channel complex composed of pore-forming and potassium-conducting alpha subunits and of regulatory beta subunits. KCNE2 beta subunit modulates the gating kinetics and enhances stability of the channel complex. Alters the gating of the delayed rectifier Kv channel containing KCNB1 alpha subunit. Associates with KCNH2/HERG alpha subunit Kv channel to form the rapidly activating component of the delayed rectifying potassium current (IKr) in heart. May associate with KCNQ2 and/or KCNQ3 alpha subunits to modulate the native M-type current (By similarity). May associate with HCN1 and HCN2 channel subunits to increase potassium current (By similarity). Forms a heterooligomer complex with KCNQ1/KVLQT1 alpha subunits which leads to currents with an apparently instantaneous activation, a rapid deactivation process and a linear current-voltage relationship and decreases the amplitude of the outward current (By similarity). KCNQ1-KCNE2 channel associates with Na(+)-coupled myo-inositol symporter in the apical membrane of choroid plexus epithelium and regulates the myo-inositol gradient between blood and cerebrospinal fluid with an impact on neuron excitability (By similarity).</text>
</comment>
<comment type="subunit">
    <text evidence="1 3">Interacts with KCNB1 (By similarity). Associates with KCNH2/ERG1 (By similarity). May associate with KCNQ2 and KCNQ3 (By similarity). Associates with HCN1 and probably HCN2 (By similarity). Heteromultimer with KCNC2. Interacts with KCNC2 (By similarity). Interacts with KCNQ1; forms a heterooligomer complex that targets to the membrane raft and leading to currents with an apparently instantaneous activation, a rapid deactivation process and a linear current-voltage relationship and decreases the amplitude of the outward current (By similarity).</text>
</comment>
<comment type="subcellular location">
    <subcellularLocation>
        <location evidence="1 3">Cell membrane</location>
        <topology evidence="1">Single-pass type I membrane protein</topology>
    </subcellularLocation>
    <subcellularLocation>
        <location evidence="2">Apical cell membrane</location>
        <topology evidence="4">Single-pass membrane protein</topology>
    </subcellularLocation>
    <text evidence="1">Colocalizes with KCNB1 at the plasma membrane.</text>
</comment>
<comment type="tissue specificity">
    <text>Detected in heart; expression is highest in the SA node and the right atrium, and barely detectable in the ventricle.</text>
</comment>
<comment type="similarity">
    <text evidence="5">Belongs to the potassium channel KCNE family.</text>
</comment>
<name>KCNE2_RABIT</name>
<gene>
    <name type="primary">KCNE2</name>
</gene>
<evidence type="ECO:0000250" key="1">
    <source>
        <dbReference type="UniProtKB" id="P63161"/>
    </source>
</evidence>
<evidence type="ECO:0000250" key="2">
    <source>
        <dbReference type="UniProtKB" id="Q9D808"/>
    </source>
</evidence>
<evidence type="ECO:0000250" key="3">
    <source>
        <dbReference type="UniProtKB" id="Q9Y6J6"/>
    </source>
</evidence>
<evidence type="ECO:0000255" key="4"/>
<evidence type="ECO:0000305" key="5"/>
<dbReference type="EMBL" id="AF329636">
    <property type="protein sequence ID" value="AAK15527.1"/>
    <property type="molecule type" value="mRNA"/>
</dbReference>
<dbReference type="SMR" id="Q9BDR0"/>
<dbReference type="STRING" id="9986.ENSOCUP00000024796"/>
<dbReference type="PaxDb" id="9986-ENSOCUP00000024796"/>
<dbReference type="eggNOG" id="ENOG502S1GJ">
    <property type="taxonomic scope" value="Eukaryota"/>
</dbReference>
<dbReference type="InParanoid" id="Q9BDR0"/>
<dbReference type="Proteomes" id="UP000001811">
    <property type="component" value="Unplaced"/>
</dbReference>
<dbReference type="GO" id="GO:0016324">
    <property type="term" value="C:apical plasma membrane"/>
    <property type="evidence" value="ECO:0007669"/>
    <property type="project" value="UniProtKB-SubCell"/>
</dbReference>
<dbReference type="GO" id="GO:0005886">
    <property type="term" value="C:plasma membrane"/>
    <property type="evidence" value="ECO:0000250"/>
    <property type="project" value="UniProtKB"/>
</dbReference>
<dbReference type="GO" id="GO:0008076">
    <property type="term" value="C:voltage-gated potassium channel complex"/>
    <property type="evidence" value="ECO:0007669"/>
    <property type="project" value="TreeGrafter"/>
</dbReference>
<dbReference type="GO" id="GO:0005251">
    <property type="term" value="F:delayed rectifier potassium channel activity"/>
    <property type="evidence" value="ECO:0007669"/>
    <property type="project" value="TreeGrafter"/>
</dbReference>
<dbReference type="GO" id="GO:0015459">
    <property type="term" value="F:potassium channel regulator activity"/>
    <property type="evidence" value="ECO:0000250"/>
    <property type="project" value="UniProtKB"/>
</dbReference>
<dbReference type="GO" id="GO:0044325">
    <property type="term" value="F:transmembrane transporter binding"/>
    <property type="evidence" value="ECO:0007669"/>
    <property type="project" value="TreeGrafter"/>
</dbReference>
<dbReference type="GO" id="GO:1902282">
    <property type="term" value="F:voltage-gated potassium channel activity involved in ventricular cardiac muscle cell action potential repolarization"/>
    <property type="evidence" value="ECO:0007669"/>
    <property type="project" value="TreeGrafter"/>
</dbReference>
<dbReference type="GO" id="GO:1902260">
    <property type="term" value="P:negative regulation of delayed rectifier potassium channel activity"/>
    <property type="evidence" value="ECO:0000250"/>
    <property type="project" value="UniProtKB"/>
</dbReference>
<dbReference type="GO" id="GO:0097623">
    <property type="term" value="P:potassium ion export across plasma membrane"/>
    <property type="evidence" value="ECO:0007669"/>
    <property type="project" value="TreeGrafter"/>
</dbReference>
<dbReference type="GO" id="GO:0086091">
    <property type="term" value="P:regulation of heart rate by cardiac conduction"/>
    <property type="evidence" value="ECO:0007669"/>
    <property type="project" value="TreeGrafter"/>
</dbReference>
<dbReference type="GO" id="GO:0060307">
    <property type="term" value="P:regulation of ventricular cardiac muscle cell membrane repolarization"/>
    <property type="evidence" value="ECO:0007669"/>
    <property type="project" value="TreeGrafter"/>
</dbReference>
<dbReference type="InterPro" id="IPR000369">
    <property type="entry name" value="K_chnl_KCNE"/>
</dbReference>
<dbReference type="PANTHER" id="PTHR15282">
    <property type="entry name" value="POTASSIUM VOLTAGE-GATED CHANNEL SUBFAMILY E MEMBER 1, 3"/>
    <property type="match status" value="1"/>
</dbReference>
<dbReference type="PANTHER" id="PTHR15282:SF8">
    <property type="entry name" value="POTASSIUM VOLTAGE-GATED CHANNEL SUBFAMILY E MEMBER 2"/>
    <property type="match status" value="1"/>
</dbReference>
<dbReference type="Pfam" id="PF02060">
    <property type="entry name" value="ISK_Channel"/>
    <property type="match status" value="1"/>
</dbReference>
<reference key="1">
    <citation type="journal article" date="2001" name="Circ. Res.">
        <title>MinK-related peptide 1: a beta subunit for the HCN ion channel subunit family enhances expression and speeds activation.</title>
        <authorList>
            <person name="Yu H."/>
            <person name="Wu J."/>
            <person name="Potapova I."/>
            <person name="Wymore R.T."/>
            <person name="Holmes B."/>
            <person name="Zuckerman J."/>
            <person name="Pan Z."/>
            <person name="Wang H."/>
            <person name="Shi W."/>
            <person name="Robinson R.B."/>
            <person name="El-Maghrabi M.R."/>
            <person name="Benjamin W."/>
            <person name="Dixon J.E."/>
            <person name="McKinnon D."/>
            <person name="Cohen I.S."/>
            <person name="Wymore R."/>
        </authorList>
    </citation>
    <scope>NUCLEOTIDE SEQUENCE [MRNA]</scope>
</reference>
<proteinExistence type="evidence at transcript level"/>
<feature type="chain" id="PRO_0000144287" description="Potassium voltage-gated channel subfamily E member 2">
    <location>
        <begin position="1" status="less than"/>
        <end position="71" status="greater than"/>
    </location>
</feature>
<feature type="transmembrane region" description="Helical" evidence="4">
    <location>
        <begin position="7"/>
        <end position="27"/>
    </location>
</feature>
<feature type="topological domain" description="Cytoplasmic" evidence="4">
    <location>
        <begin position="28"/>
        <end position="71" status="greater than"/>
    </location>
</feature>
<feature type="non-terminal residue">
    <location>
        <position position="1"/>
    </location>
</feature>
<feature type="non-terminal residue">
    <location>
        <position position="71"/>
    </location>
</feature>
<sequence length="71" mass="8557">AENFYYVILYLMVMIGMFSFIIVAILVSTVKSKRREHSNDPYHQYIVEDWQEKYKSQILHFEEAKATIHEN</sequence>